<reference key="1">
    <citation type="journal article" date="1994" name="J. Mol. Evol.">
        <title>Phylogeny of the Drosophila obscura species group deduced from mitochondrial DNA sequences.</title>
        <authorList>
            <person name="Barrio E."/>
            <person name="Latorre A."/>
            <person name="Moya A."/>
        </authorList>
    </citation>
    <scope>NUCLEOTIDE SEQUENCE [GENOMIC DNA] OF 1-152 AND 302-312</scope>
</reference>
<reference key="2">
    <citation type="journal article" date="1992" name="Proc. Natl. Acad. Sci. U.S.A.">
        <title>Stable heteroplasmy for a large-scale deletion in the coding region of Drosophila subobscura mitochondrial DNA.</title>
        <authorList>
            <person name="Volz-Lingenhohl A."/>
            <person name="Solignac M."/>
            <person name="Sperlich D."/>
        </authorList>
    </citation>
    <scope>NUCLEOTIDE SEQUENCE [GENOMIC DNA] OF 50-312</scope>
    <source>
        <strain>SSP. TUE 3</strain>
    </source>
</reference>
<comment type="function">
    <text evidence="1">Core subunit of the mitochondrial membrane respiratory chain NADH dehydrogenase (Complex I) that is believed to belong to the minimal assembly required for catalysis. Complex I functions in the transfer of electrons from NADH to the respiratory chain. The immediate electron acceptor for the enzyme is believed to be ubiquinone (By similarity).</text>
</comment>
<comment type="catalytic activity">
    <reaction>
        <text>a ubiquinone + NADH + 5 H(+)(in) = a ubiquinol + NAD(+) + 4 H(+)(out)</text>
        <dbReference type="Rhea" id="RHEA:29091"/>
        <dbReference type="Rhea" id="RHEA-COMP:9565"/>
        <dbReference type="Rhea" id="RHEA-COMP:9566"/>
        <dbReference type="ChEBI" id="CHEBI:15378"/>
        <dbReference type="ChEBI" id="CHEBI:16389"/>
        <dbReference type="ChEBI" id="CHEBI:17976"/>
        <dbReference type="ChEBI" id="CHEBI:57540"/>
        <dbReference type="ChEBI" id="CHEBI:57945"/>
        <dbReference type="EC" id="7.1.1.2"/>
    </reaction>
</comment>
<comment type="subcellular location">
    <subcellularLocation>
        <location evidence="1">Mitochondrion inner membrane</location>
        <topology evidence="1">Multi-pass membrane protein</topology>
    </subcellularLocation>
</comment>
<comment type="similarity">
    <text evidence="3">Belongs to the complex I subunit 1 family.</text>
</comment>
<dbReference type="EC" id="7.1.1.2"/>
<dbReference type="EMBL" id="U07287">
    <property type="protein sequence ID" value="AAA76625.1"/>
    <property type="molecule type" value="Genomic_DNA"/>
</dbReference>
<dbReference type="EMBL" id="U07288">
    <property type="protein sequence ID" value="AAA76626.1"/>
    <property type="molecule type" value="Genomic_DNA"/>
</dbReference>
<dbReference type="EMBL" id="X65130">
    <property type="protein sequence ID" value="CAA46260.1"/>
    <property type="molecule type" value="Genomic_DNA"/>
</dbReference>
<dbReference type="SMR" id="P51937"/>
<dbReference type="EnsemblMetazoa" id="GeneID_43561568_t1">
    <property type="protein sequence ID" value="YP_009725130.1"/>
    <property type="gene ID" value="GeneID_43561568"/>
</dbReference>
<dbReference type="GO" id="GO:0005743">
    <property type="term" value="C:mitochondrial inner membrane"/>
    <property type="evidence" value="ECO:0007669"/>
    <property type="project" value="UniProtKB-SubCell"/>
</dbReference>
<dbReference type="GO" id="GO:0008137">
    <property type="term" value="F:NADH dehydrogenase (ubiquinone) activity"/>
    <property type="evidence" value="ECO:0007669"/>
    <property type="project" value="UniProtKB-EC"/>
</dbReference>
<dbReference type="GO" id="GO:0009060">
    <property type="term" value="P:aerobic respiration"/>
    <property type="evidence" value="ECO:0007669"/>
    <property type="project" value="TreeGrafter"/>
</dbReference>
<dbReference type="HAMAP" id="MF_01350">
    <property type="entry name" value="NDH1_NuoH"/>
    <property type="match status" value="1"/>
</dbReference>
<dbReference type="InterPro" id="IPR001694">
    <property type="entry name" value="NADH_UbQ_OxRdtase_su1/FPO"/>
</dbReference>
<dbReference type="InterPro" id="IPR018086">
    <property type="entry name" value="NADH_UbQ_OxRdtase_su1_CS"/>
</dbReference>
<dbReference type="PANTHER" id="PTHR11432">
    <property type="entry name" value="NADH DEHYDROGENASE SUBUNIT 1"/>
    <property type="match status" value="1"/>
</dbReference>
<dbReference type="PANTHER" id="PTHR11432:SF3">
    <property type="entry name" value="NADH-UBIQUINONE OXIDOREDUCTASE CHAIN 1"/>
    <property type="match status" value="1"/>
</dbReference>
<dbReference type="Pfam" id="PF00146">
    <property type="entry name" value="NADHdh"/>
    <property type="match status" value="1"/>
</dbReference>
<dbReference type="PROSITE" id="PS00667">
    <property type="entry name" value="COMPLEX1_ND1_1"/>
    <property type="match status" value="1"/>
</dbReference>
<dbReference type="PROSITE" id="PS00668">
    <property type="entry name" value="COMPLEX1_ND1_2"/>
    <property type="match status" value="1"/>
</dbReference>
<gene>
    <name type="primary">mt:ND1</name>
    <name type="synonym">ND1</name>
</gene>
<organism>
    <name type="scientific">Drosophila subobscura</name>
    <name type="common">Fruit fly</name>
    <dbReference type="NCBI Taxonomy" id="7241"/>
    <lineage>
        <taxon>Eukaryota</taxon>
        <taxon>Metazoa</taxon>
        <taxon>Ecdysozoa</taxon>
        <taxon>Arthropoda</taxon>
        <taxon>Hexapoda</taxon>
        <taxon>Insecta</taxon>
        <taxon>Pterygota</taxon>
        <taxon>Neoptera</taxon>
        <taxon>Endopterygota</taxon>
        <taxon>Diptera</taxon>
        <taxon>Brachycera</taxon>
        <taxon>Muscomorpha</taxon>
        <taxon>Ephydroidea</taxon>
        <taxon>Drosophilidae</taxon>
        <taxon>Drosophila</taxon>
        <taxon>Sophophora</taxon>
    </lineage>
</organism>
<sequence length="312" mass="35877">MEFILSLIGSLLLIICVLVSVAFLTLLERKVLGYIQIRKGPNKVGLMGIPQPFCDAIKLFTKEQTYPLLSNYLSYYISPIFSLFLSLFVWMCMPFFVKLYSFNLGGLFFLCCTSLGVYTVMVAGWSSNSNYALLGGLRAVAQTISYEVSLALILLSFVFLIGSYNMVYFFYYQIYVWFLIILFPMALVWLTISLAETNRTPFDFAEGESELVSGFNVEYSSGGFALIFMAEYASILFMSMLFCVIFLGCDVFNLLFYVKLTFISFIFIWARGTLPRFRYDKLMYLAWKCFLSFSLNYLLFFIGFKILLFSLL</sequence>
<keyword id="KW-0249">Electron transport</keyword>
<keyword id="KW-0472">Membrane</keyword>
<keyword id="KW-0496">Mitochondrion</keyword>
<keyword id="KW-0999">Mitochondrion inner membrane</keyword>
<keyword id="KW-0520">NAD</keyword>
<keyword id="KW-0679">Respiratory chain</keyword>
<keyword id="KW-1278">Translocase</keyword>
<keyword id="KW-0812">Transmembrane</keyword>
<keyword id="KW-1133">Transmembrane helix</keyword>
<keyword id="KW-0813">Transport</keyword>
<keyword id="KW-0830">Ubiquinone</keyword>
<geneLocation type="mitochondrion"/>
<name>NU1M_DROSU</name>
<proteinExistence type="inferred from homology"/>
<accession>P51937</accession>
<accession>Q34380</accession>
<protein>
    <recommendedName>
        <fullName>NADH-ubiquinone oxidoreductase chain 1</fullName>
        <ecNumber>7.1.1.2</ecNumber>
    </recommendedName>
    <alternativeName>
        <fullName>NADH dehydrogenase subunit 1</fullName>
    </alternativeName>
</protein>
<evidence type="ECO:0000250" key="1"/>
<evidence type="ECO:0000255" key="2"/>
<evidence type="ECO:0000305" key="3"/>
<feature type="chain" id="PRO_0000117397" description="NADH-ubiquinone oxidoreductase chain 1">
    <location>
        <begin position="1"/>
        <end position="312"/>
    </location>
</feature>
<feature type="transmembrane region" description="Helical" evidence="2">
    <location>
        <begin position="3"/>
        <end position="23"/>
    </location>
</feature>
<feature type="transmembrane region" description="Helical" evidence="2">
    <location>
        <begin position="77"/>
        <end position="97"/>
    </location>
</feature>
<feature type="transmembrane region" description="Helical" evidence="2">
    <location>
        <begin position="104"/>
        <end position="124"/>
    </location>
</feature>
<feature type="transmembrane region" description="Helical" evidence="2">
    <location>
        <begin position="150"/>
        <end position="170"/>
    </location>
</feature>
<feature type="transmembrane region" description="Helical" evidence="2">
    <location>
        <begin position="174"/>
        <end position="194"/>
    </location>
</feature>
<feature type="transmembrane region" description="Helical" evidence="2">
    <location>
        <begin position="226"/>
        <end position="246"/>
    </location>
</feature>
<feature type="transmembrane region" description="Helical" evidence="2">
    <location>
        <begin position="250"/>
        <end position="270"/>
    </location>
</feature>
<feature type="transmembrane region" description="Helical" evidence="2">
    <location>
        <begin position="289"/>
        <end position="309"/>
    </location>
</feature>